<name>LIPB_RICM5</name>
<feature type="chain" id="PRO_0000321665" description="Octanoyltransferase">
    <location>
        <begin position="1"/>
        <end position="211"/>
    </location>
</feature>
<feature type="domain" description="BPL/LPL catalytic" evidence="2">
    <location>
        <begin position="32"/>
        <end position="211"/>
    </location>
</feature>
<feature type="active site" description="Acyl-thioester intermediate" evidence="1">
    <location>
        <position position="176"/>
    </location>
</feature>
<feature type="binding site" evidence="1">
    <location>
        <begin position="71"/>
        <end position="78"/>
    </location>
    <ligand>
        <name>substrate</name>
    </ligand>
</feature>
<feature type="binding site" evidence="1">
    <location>
        <begin position="145"/>
        <end position="147"/>
    </location>
    <ligand>
        <name>substrate</name>
    </ligand>
</feature>
<feature type="binding site" evidence="1">
    <location>
        <begin position="158"/>
        <end position="160"/>
    </location>
    <ligand>
        <name>substrate</name>
    </ligand>
</feature>
<feature type="site" description="Lowers pKa of active site Cys" evidence="1">
    <location>
        <position position="142"/>
    </location>
</feature>
<reference key="1">
    <citation type="journal article" date="2007" name="Genome Res.">
        <title>Lateral gene transfer between obligate intracellular bacteria: evidence from the Rickettsia massiliae genome.</title>
        <authorList>
            <person name="Blanc G."/>
            <person name="Ogata H."/>
            <person name="Robert C."/>
            <person name="Audic S."/>
            <person name="Claverie J.-M."/>
            <person name="Raoult D."/>
        </authorList>
    </citation>
    <scope>NUCLEOTIDE SEQUENCE [LARGE SCALE GENOMIC DNA]</scope>
    <source>
        <strain>Mtu5</strain>
    </source>
</reference>
<organism>
    <name type="scientific">Rickettsia massiliae (strain Mtu5)</name>
    <dbReference type="NCBI Taxonomy" id="416276"/>
    <lineage>
        <taxon>Bacteria</taxon>
        <taxon>Pseudomonadati</taxon>
        <taxon>Pseudomonadota</taxon>
        <taxon>Alphaproteobacteria</taxon>
        <taxon>Rickettsiales</taxon>
        <taxon>Rickettsiaceae</taxon>
        <taxon>Rickettsieae</taxon>
        <taxon>Rickettsia</taxon>
        <taxon>spotted fever group</taxon>
    </lineage>
</organism>
<accession>A8F300</accession>
<comment type="function">
    <text evidence="1">Catalyzes the transfer of endogenously produced octanoic acid from octanoyl-acyl-carrier-protein onto the lipoyl domains of lipoate-dependent enzymes. Lipoyl-ACP can also act as a substrate although octanoyl-ACP is likely to be the physiological substrate.</text>
</comment>
<comment type="catalytic activity">
    <reaction evidence="1">
        <text>octanoyl-[ACP] + L-lysyl-[protein] = N(6)-octanoyl-L-lysyl-[protein] + holo-[ACP] + H(+)</text>
        <dbReference type="Rhea" id="RHEA:17665"/>
        <dbReference type="Rhea" id="RHEA-COMP:9636"/>
        <dbReference type="Rhea" id="RHEA-COMP:9685"/>
        <dbReference type="Rhea" id="RHEA-COMP:9752"/>
        <dbReference type="Rhea" id="RHEA-COMP:9928"/>
        <dbReference type="ChEBI" id="CHEBI:15378"/>
        <dbReference type="ChEBI" id="CHEBI:29969"/>
        <dbReference type="ChEBI" id="CHEBI:64479"/>
        <dbReference type="ChEBI" id="CHEBI:78463"/>
        <dbReference type="ChEBI" id="CHEBI:78809"/>
        <dbReference type="EC" id="2.3.1.181"/>
    </reaction>
</comment>
<comment type="pathway">
    <text evidence="1">Protein modification; protein lipoylation via endogenous pathway; protein N(6)-(lipoyl)lysine from octanoyl-[acyl-carrier-protein]: step 1/2.</text>
</comment>
<comment type="subcellular location">
    <subcellularLocation>
        <location evidence="1">Cytoplasm</location>
    </subcellularLocation>
</comment>
<comment type="miscellaneous">
    <text evidence="1">In the reaction, the free carboxyl group of octanoic acid is attached via an amide linkage to the epsilon-amino group of a specific lysine residue of lipoyl domains of lipoate-dependent enzymes.</text>
</comment>
<comment type="similarity">
    <text evidence="1">Belongs to the LipB family.</text>
</comment>
<evidence type="ECO:0000255" key="1">
    <source>
        <dbReference type="HAMAP-Rule" id="MF_00013"/>
    </source>
</evidence>
<evidence type="ECO:0000255" key="2">
    <source>
        <dbReference type="PROSITE-ProRule" id="PRU01067"/>
    </source>
</evidence>
<gene>
    <name evidence="1" type="primary">lipB</name>
    <name type="ordered locus">RMA_1349</name>
</gene>
<protein>
    <recommendedName>
        <fullName evidence="1">Octanoyltransferase</fullName>
        <ecNumber evidence="1">2.3.1.181</ecNumber>
    </recommendedName>
    <alternativeName>
        <fullName evidence="1">Lipoate-protein ligase B</fullName>
    </alternativeName>
    <alternativeName>
        <fullName evidence="1">Lipoyl/octanoyl transferase</fullName>
    </alternativeName>
    <alternativeName>
        <fullName evidence="1">Octanoyl-[acyl-carrier-protein]-protein N-octanoyltransferase</fullName>
    </alternativeName>
</protein>
<sequence length="211" mass="24324">MNMIRFITIPDFADYQVTLKLMEDYVNKVISDHEPEIIYLVEHSEVYTAGTNYKQEELLNYGDIPVIYTGRGGKFTFHGPGQRVIYPILNLASPNRHKDLKLYIKMLEEWIINSLNYFGIKAYIIKDKVGIWAKVRKDEFAKIAAIGVRVRKWVTYHGVAINISTDLSKFSGIIPCGLENSLITSLNQLGIHVEMSEFDKIIQTEFNKIFK</sequence>
<dbReference type="EC" id="2.3.1.181" evidence="1"/>
<dbReference type="EMBL" id="CP000683">
    <property type="protein sequence ID" value="ABV85286.1"/>
    <property type="molecule type" value="Genomic_DNA"/>
</dbReference>
<dbReference type="SMR" id="A8F300"/>
<dbReference type="KEGG" id="rms:RMA_1349"/>
<dbReference type="HOGENOM" id="CLU_035168_3_0_5"/>
<dbReference type="UniPathway" id="UPA00538">
    <property type="reaction ID" value="UER00592"/>
</dbReference>
<dbReference type="Proteomes" id="UP000001311">
    <property type="component" value="Chromosome"/>
</dbReference>
<dbReference type="GO" id="GO:0005737">
    <property type="term" value="C:cytoplasm"/>
    <property type="evidence" value="ECO:0007669"/>
    <property type="project" value="UniProtKB-SubCell"/>
</dbReference>
<dbReference type="GO" id="GO:0033819">
    <property type="term" value="F:lipoyl(octanoyl) transferase activity"/>
    <property type="evidence" value="ECO:0007669"/>
    <property type="project" value="UniProtKB-EC"/>
</dbReference>
<dbReference type="GO" id="GO:0036211">
    <property type="term" value="P:protein modification process"/>
    <property type="evidence" value="ECO:0007669"/>
    <property type="project" value="InterPro"/>
</dbReference>
<dbReference type="CDD" id="cd16444">
    <property type="entry name" value="LipB"/>
    <property type="match status" value="1"/>
</dbReference>
<dbReference type="Gene3D" id="3.30.930.10">
    <property type="entry name" value="Bira Bifunctional Protein, Domain 2"/>
    <property type="match status" value="1"/>
</dbReference>
<dbReference type="HAMAP" id="MF_00013">
    <property type="entry name" value="LipB"/>
    <property type="match status" value="1"/>
</dbReference>
<dbReference type="InterPro" id="IPR045864">
    <property type="entry name" value="aa-tRNA-synth_II/BPL/LPL"/>
</dbReference>
<dbReference type="InterPro" id="IPR004143">
    <property type="entry name" value="BPL_LPL_catalytic"/>
</dbReference>
<dbReference type="InterPro" id="IPR000544">
    <property type="entry name" value="Octanoyltransferase"/>
</dbReference>
<dbReference type="InterPro" id="IPR020605">
    <property type="entry name" value="Octanoyltransferase_CS"/>
</dbReference>
<dbReference type="NCBIfam" id="TIGR00214">
    <property type="entry name" value="lipB"/>
    <property type="match status" value="1"/>
</dbReference>
<dbReference type="NCBIfam" id="NF010921">
    <property type="entry name" value="PRK14341.1"/>
    <property type="match status" value="1"/>
</dbReference>
<dbReference type="NCBIfam" id="NF010925">
    <property type="entry name" value="PRK14345.1"/>
    <property type="match status" value="1"/>
</dbReference>
<dbReference type="PANTHER" id="PTHR10993:SF7">
    <property type="entry name" value="LIPOYLTRANSFERASE 2, MITOCHONDRIAL-RELATED"/>
    <property type="match status" value="1"/>
</dbReference>
<dbReference type="PANTHER" id="PTHR10993">
    <property type="entry name" value="OCTANOYLTRANSFERASE"/>
    <property type="match status" value="1"/>
</dbReference>
<dbReference type="Pfam" id="PF21948">
    <property type="entry name" value="LplA-B_cat"/>
    <property type="match status" value="1"/>
</dbReference>
<dbReference type="PIRSF" id="PIRSF016262">
    <property type="entry name" value="LPLase"/>
    <property type="match status" value="1"/>
</dbReference>
<dbReference type="SUPFAM" id="SSF55681">
    <property type="entry name" value="Class II aaRS and biotin synthetases"/>
    <property type="match status" value="1"/>
</dbReference>
<dbReference type="PROSITE" id="PS51733">
    <property type="entry name" value="BPL_LPL_CATALYTIC"/>
    <property type="match status" value="1"/>
</dbReference>
<dbReference type="PROSITE" id="PS01313">
    <property type="entry name" value="LIPB"/>
    <property type="match status" value="1"/>
</dbReference>
<keyword id="KW-0012">Acyltransferase</keyword>
<keyword id="KW-0963">Cytoplasm</keyword>
<keyword id="KW-0808">Transferase</keyword>
<proteinExistence type="inferred from homology"/>